<feature type="chain" id="PRO_0000333160" description="Membrane-associated protein TcaA">
    <location>
        <begin position="1"/>
        <end position="460"/>
    </location>
</feature>
<feature type="topological domain" description="Cytoplasmic" evidence="1">
    <location>
        <begin position="1"/>
        <end position="49"/>
    </location>
</feature>
<feature type="transmembrane region" description="Helical" evidence="1">
    <location>
        <begin position="50"/>
        <end position="70"/>
    </location>
</feature>
<feature type="topological domain" description="Extracellular" evidence="1">
    <location>
        <begin position="71"/>
        <end position="460"/>
    </location>
</feature>
<feature type="zinc finger region" description="C4-type" evidence="1">
    <location>
        <begin position="4"/>
        <end position="21"/>
    </location>
</feature>
<feature type="region of interest" description="Required for teicoplanin susceptibility">
    <location>
        <begin position="49"/>
        <end position="177"/>
    </location>
</feature>
<name>TCAA_STAAC</name>
<sequence length="460" mass="52148">MKSCPKCGQQAQDDVQICTQCGHKFDSRQAFYRKSTDEDIQTNNIKMRKMVPWAIGFFILILIIILFFLLRNFNSPEAQTKILVNAIENNDKQKVATLLSTKDNKVDSEEAKVYINYIKDEVGLKQFVSDLKNTVHKLNKSKTSVASYIQTRSGQNILRVSKNGTRYIFFDNMSFTAPTKQPIVKPKEKTKYEFKSGGKKKMVIAEANKVTPIGNFIPGTYRIPAMKSTENGDFAGHLKFDFRQSNSETVDVTEDFEEANISVTLKGDTKLNDSSKKVTINDHEMAFSSSKTYGPYPQNKDITISASGKAKDKTFTTQTKTIKASDLKYNTEITLNFDSEDIEDYVEKKEKEENSLKNKLIEFFAGYSLANNAAFNQSDFDFVSSYIKKGSSFYDDVKKRVSKGSLMMISSPQIIDAEKHGDKITATVRLINENGKQVDKEYELEQGSQDRLQLIKTSEK</sequence>
<reference key="1">
    <citation type="journal article" date="2000" name="Biochim. Biophys. Acta">
        <title>Inactivation of a novel three-cistronic operon tcaR-tcaA-tcaB increases teicoplanin resistance in Staphylococcus aureus.</title>
        <authorList>
            <person name="Brandenberger M."/>
            <person name="Tschierske M."/>
            <person name="Giachino P."/>
            <person name="Wada A."/>
            <person name="Berger-Baechi B."/>
        </authorList>
    </citation>
    <scope>NUCLEOTIDE SEQUENCE [GENOMIC DNA]</scope>
</reference>
<reference key="2">
    <citation type="journal article" date="2005" name="J. Bacteriol.">
        <title>Insights on evolution of virulence and resistance from the complete genome analysis of an early methicillin-resistant Staphylococcus aureus strain and a biofilm-producing methicillin-resistant Staphylococcus epidermidis strain.</title>
        <authorList>
            <person name="Gill S.R."/>
            <person name="Fouts D.E."/>
            <person name="Archer G.L."/>
            <person name="Mongodin E.F."/>
            <person name="DeBoy R.T."/>
            <person name="Ravel J."/>
            <person name="Paulsen I.T."/>
            <person name="Kolonay J.F."/>
            <person name="Brinkac L.M."/>
            <person name="Beanan M.J."/>
            <person name="Dodson R.J."/>
            <person name="Daugherty S.C."/>
            <person name="Madupu R."/>
            <person name="Angiuoli S.V."/>
            <person name="Durkin A.S."/>
            <person name="Haft D.H."/>
            <person name="Vamathevan J.J."/>
            <person name="Khouri H."/>
            <person name="Utterback T.R."/>
            <person name="Lee C."/>
            <person name="Dimitrov G."/>
            <person name="Jiang L."/>
            <person name="Qin H."/>
            <person name="Weidman J."/>
            <person name="Tran K."/>
            <person name="Kang K.H."/>
            <person name="Hance I.R."/>
            <person name="Nelson K.E."/>
            <person name="Fraser C.M."/>
        </authorList>
    </citation>
    <scope>NUCLEOTIDE SEQUENCE [LARGE SCALE GENOMIC DNA]</scope>
    <source>
        <strain>COL</strain>
    </source>
</reference>
<reference key="3">
    <citation type="journal article" date="2004" name="Antimicrob. Agents Chemother.">
        <title>TcaA inactivation increases glycopeptide resistance in Staphylococcus aureus.</title>
        <authorList>
            <person name="Maki H."/>
            <person name="McCallum N."/>
            <person name="Bischoff M."/>
            <person name="Wada A."/>
            <person name="Berger-Baechi B."/>
        </authorList>
    </citation>
    <scope>FUNCTION IN TEICOPLANIN SUSCEPTIBILITY</scope>
    <scope>INDUCTION</scope>
    <scope>DISRUPTION PHENOTYPE</scope>
</reference>
<reference key="4">
    <citation type="journal article" date="2006" name="Biochim. Biophys. Acta">
        <title>Strain dependence of the cell wall-damage induced stimulon in Staphylococcus aureus.</title>
        <authorList>
            <person name="McCallum N."/>
            <person name="Spehar G."/>
            <person name="Bischoff M."/>
            <person name="Berger-Bachi B."/>
        </authorList>
    </citation>
    <scope>INDUCTION</scope>
</reference>
<reference key="5">
    <citation type="journal article" date="2007" name="Antimicrob. Agents Chemother.">
        <title>Functional characterization of tcaA: minimal requirement for teicoplanin susceptibility and role in Caenorhabditis elegans virulence.</title>
        <authorList>
            <person name="McCallum N."/>
            <person name="Brassinga A.K.C."/>
            <person name="Sifri C.D."/>
            <person name="Berger-Baechi B."/>
        </authorList>
    </citation>
    <scope>TOPOLOGY</scope>
</reference>
<accession>Q5HDJ9</accession>
<accession>Q9F4G2</accession>
<dbReference type="EMBL" id="AY008833">
    <property type="protein sequence ID" value="AAG23888.1"/>
    <property type="molecule type" value="Genomic_DNA"/>
</dbReference>
<dbReference type="EMBL" id="CP000046">
    <property type="protein sequence ID" value="AAW37180.1"/>
    <property type="molecule type" value="Genomic_DNA"/>
</dbReference>
<dbReference type="RefSeq" id="WP_000833786.1">
    <property type="nucleotide sequence ID" value="NC_002951.2"/>
</dbReference>
<dbReference type="SMR" id="Q5HDJ9"/>
<dbReference type="KEGG" id="sac:SACOL2352"/>
<dbReference type="HOGENOM" id="CLU_047245_0_0_9"/>
<dbReference type="PHI-base" id="PHI:7918"/>
<dbReference type="Proteomes" id="UP000000530">
    <property type="component" value="Chromosome"/>
</dbReference>
<dbReference type="GO" id="GO:0005886">
    <property type="term" value="C:plasma membrane"/>
    <property type="evidence" value="ECO:0007669"/>
    <property type="project" value="UniProtKB-SubCell"/>
</dbReference>
<dbReference type="GO" id="GO:0008270">
    <property type="term" value="F:zinc ion binding"/>
    <property type="evidence" value="ECO:0007669"/>
    <property type="project" value="UniProtKB-KW"/>
</dbReference>
<dbReference type="GO" id="GO:0046677">
    <property type="term" value="P:response to antibiotic"/>
    <property type="evidence" value="ECO:0007669"/>
    <property type="project" value="UniProtKB-KW"/>
</dbReference>
<dbReference type="InterPro" id="IPR023599">
    <property type="entry name" value="Mem_prot_TcaA"/>
</dbReference>
<dbReference type="InterPro" id="IPR054529">
    <property type="entry name" value="TcaA_2nd"/>
</dbReference>
<dbReference type="InterPro" id="IPR054530">
    <property type="entry name" value="TcaA_4th"/>
</dbReference>
<dbReference type="PANTHER" id="PTHR40038">
    <property type="entry name" value="MEMBRANE-ASSOCIATED PROTEIN TCAA"/>
    <property type="match status" value="1"/>
</dbReference>
<dbReference type="PANTHER" id="PTHR40038:SF1">
    <property type="entry name" value="MEMBRANE-ASSOCIATED PROTEIN TCAA"/>
    <property type="match status" value="1"/>
</dbReference>
<dbReference type="Pfam" id="PF22813">
    <property type="entry name" value="TcaA_2nd"/>
    <property type="match status" value="1"/>
</dbReference>
<dbReference type="Pfam" id="PF22820">
    <property type="entry name" value="TcaA_3rd_4th"/>
    <property type="match status" value="1"/>
</dbReference>
<dbReference type="Pfam" id="PF22819">
    <property type="entry name" value="TcaA_5th"/>
    <property type="match status" value="1"/>
</dbReference>
<dbReference type="PIRSF" id="PIRSF032522">
    <property type="entry name" value="TcaA"/>
    <property type="match status" value="1"/>
</dbReference>
<comment type="function">
    <text evidence="2">Plays a major role in decreasing resistance to glycopeptide antibiotics. Overexpression confers oxacillin hypersusceptibility, without affecting the levels of resistance towards vancomycin. Could be involved in virulence. Overexpression increases the levels of teicoplanin susceptibility. Overexpression also increased susceptibility to oxacillin in methicillin-resistant strains.</text>
</comment>
<comment type="subcellular location">
    <subcellularLocation>
        <location>Cell membrane</location>
        <topology>Single-pass membrane protein</topology>
    </subcellularLocation>
</comment>
<comment type="induction">
    <text evidence="2 3">Strongly up-regulated by teicoplanin and vancomycin even at lower concentrations (10 ug/ml). Induced by oxacillin at a very high concentration of over 1000 ug/ml.</text>
</comment>
<comment type="disruption phenotype">
    <text evidence="2">Increased resistance against glycopeptide antibiotics, especially teicoplanin.</text>
</comment>
<comment type="similarity">
    <text evidence="4">Belongs to the TcaA family.</text>
</comment>
<gene>
    <name type="primary">tcaA</name>
    <name type="ordered locus">SACOL2352</name>
</gene>
<proteinExistence type="evidence at protein level"/>
<evidence type="ECO:0000255" key="1"/>
<evidence type="ECO:0000269" key="2">
    <source>
    </source>
</evidence>
<evidence type="ECO:0000269" key="3">
    <source>
    </source>
</evidence>
<evidence type="ECO:0000305" key="4"/>
<organism>
    <name type="scientific">Staphylococcus aureus (strain COL)</name>
    <dbReference type="NCBI Taxonomy" id="93062"/>
    <lineage>
        <taxon>Bacteria</taxon>
        <taxon>Bacillati</taxon>
        <taxon>Bacillota</taxon>
        <taxon>Bacilli</taxon>
        <taxon>Bacillales</taxon>
        <taxon>Staphylococcaceae</taxon>
        <taxon>Staphylococcus</taxon>
    </lineage>
</organism>
<keyword id="KW-0046">Antibiotic resistance</keyword>
<keyword id="KW-1003">Cell membrane</keyword>
<keyword id="KW-0472">Membrane</keyword>
<keyword id="KW-0479">Metal-binding</keyword>
<keyword id="KW-0812">Transmembrane</keyword>
<keyword id="KW-1133">Transmembrane helix</keyword>
<keyword id="KW-0862">Zinc</keyword>
<keyword id="KW-0863">Zinc-finger</keyword>
<protein>
    <recommendedName>
        <fullName>Membrane-associated protein TcaA</fullName>
    </recommendedName>
    <alternativeName>
        <fullName>Teicoplanin-associated protein A</fullName>
    </alternativeName>
</protein>